<evidence type="ECO:0000255" key="1">
    <source>
        <dbReference type="HAMAP-Rule" id="MF_04067"/>
    </source>
</evidence>
<protein>
    <recommendedName>
        <fullName evidence="1">Nuclear export protein</fullName>
        <shortName evidence="1">NEP</shortName>
    </recommendedName>
    <alternativeName>
        <fullName evidence="1">Non-structural protein 2</fullName>
        <shortName evidence="1">NS2</shortName>
    </alternativeName>
</protein>
<reference key="1">
    <citation type="journal article" date="1989" name="Virology">
        <title>The B allele of the NS gene of avian influenza viruses, but not the A allele, attenuates a human influenza A virus for squirrel monkeys.</title>
        <authorList>
            <person name="Treanor J.J."/>
            <person name="Snyder M.H."/>
            <person name="London W.T."/>
            <person name="Murphy B.R."/>
        </authorList>
    </citation>
    <scope>NUCLEOTIDE SEQUENCE [GENOMIC RNA]</scope>
</reference>
<organism>
    <name type="scientific">Influenza A virus (strain A/Mallard/New York/6750/1978 H2N2)</name>
    <dbReference type="NCBI Taxonomy" id="384502"/>
    <lineage>
        <taxon>Viruses</taxon>
        <taxon>Riboviria</taxon>
        <taxon>Orthornavirae</taxon>
        <taxon>Negarnaviricota</taxon>
        <taxon>Polyploviricotina</taxon>
        <taxon>Insthoviricetes</taxon>
        <taxon>Articulavirales</taxon>
        <taxon>Orthomyxoviridae</taxon>
        <taxon>Alphainfluenzavirus</taxon>
        <taxon>Alphainfluenzavirus influenzae</taxon>
        <taxon>Influenza A virus</taxon>
    </lineage>
</organism>
<accession>P21527</accession>
<organismHost>
    <name type="scientific">Aves</name>
    <dbReference type="NCBI Taxonomy" id="8782"/>
</organismHost>
<organismHost>
    <name type="scientific">Homo sapiens</name>
    <name type="common">Human</name>
    <dbReference type="NCBI Taxonomy" id="9606"/>
</organismHost>
<feature type="chain" id="PRO_0000078998" description="Nuclear export protein">
    <location>
        <begin position="1"/>
        <end position="121"/>
    </location>
</feature>
<feature type="short sequence motif" description="Nuclear export signal" evidence="1">
    <location>
        <begin position="12"/>
        <end position="21"/>
    </location>
</feature>
<feature type="short sequence motif" description="Nuclear export signal" evidence="1">
    <location>
        <begin position="85"/>
        <end position="94"/>
    </location>
</feature>
<proteinExistence type="inferred from homology"/>
<keyword id="KW-0025">Alternative splicing</keyword>
<keyword id="KW-1048">Host nucleus</keyword>
<keyword id="KW-0945">Host-virus interaction</keyword>
<keyword id="KW-0813">Transport</keyword>
<keyword id="KW-0946">Virion</keyword>
<comment type="function">
    <text evidence="1">Mediates the nuclear export of encapsidated genomic RNAs (ribonucleoproteins, RNPs). Acts as an adapter between viral RNPs complexes and the nuclear export machinery of the cell. Possesses no intrinsic RNA-binding activity, but includes a C-terminal M1-binding domain. This domain is believed to allow recognition of RNPs bound to the protein M1. Since protein M1 is not available in large quantities before late stages of infection, such an indirect recognition mechanism probably ensures that genomic RNPs are not exported from the host nucleus until sufficient quantities of viral mRNA and progeny genomic RNA have been synthesized. Furthermore, the RNPs enter the host cytoplasm only when associated with the M1 protein that is necessary to guide them to the plasma membrane. May down-regulate viral RNA synthesis when overproduced.</text>
</comment>
<comment type="subunit">
    <text evidence="1">Interacts with protein M1. May interact with host nucleoporin RAB/HRB and exportin XPO1/CRM1.</text>
</comment>
<comment type="subcellular location">
    <subcellularLocation>
        <location evidence="1">Virion</location>
    </subcellularLocation>
    <subcellularLocation>
        <location evidence="1">Host nucleus</location>
    </subcellularLocation>
</comment>
<comment type="alternative products">
    <event type="alternative splicing"/>
    <isoform>
        <id>P21527-1</id>
        <name>NEP</name>
        <name>NS2</name>
        <sequence type="displayed"/>
    </isoform>
    <isoform>
        <id>P69417-1</id>
        <name>NS1</name>
        <sequence type="external"/>
    </isoform>
</comment>
<comment type="miscellaneous">
    <text>Average number present in a viral particle is estimated to be 130-200 molecules.</text>
</comment>
<comment type="similarity">
    <text evidence="1">Belongs to the influenza viruses NEP family.</text>
</comment>
<sequence>MDSNTVSSFQDILMRMSKMQLGSSSEDLNGMITQFESLKLYRDSLGEAVMRMGDLHSLQSRNGKWREQLSQKFEEIRWLIEEVRHRLKITENSFEQITFMQALQLLLEVEQEIRTFSFQLI</sequence>
<gene>
    <name evidence="1" type="primary">NS</name>
</gene>
<dbReference type="EMBL" id="M25376">
    <property type="protein sequence ID" value="AAA43546.1"/>
    <property type="molecule type" value="Genomic_RNA"/>
</dbReference>
<dbReference type="SMR" id="P21527"/>
<dbReference type="Proteomes" id="UP000098172">
    <property type="component" value="Genome"/>
</dbReference>
<dbReference type="GO" id="GO:0042025">
    <property type="term" value="C:host cell nucleus"/>
    <property type="evidence" value="ECO:0007669"/>
    <property type="project" value="UniProtKB-SubCell"/>
</dbReference>
<dbReference type="GO" id="GO:0044423">
    <property type="term" value="C:virion component"/>
    <property type="evidence" value="ECO:0007669"/>
    <property type="project" value="UniProtKB-UniRule"/>
</dbReference>
<dbReference type="GO" id="GO:0039675">
    <property type="term" value="P:exit of virus from host cell nucleus through nuclear pore"/>
    <property type="evidence" value="ECO:0007669"/>
    <property type="project" value="UniProtKB-UniRule"/>
</dbReference>
<dbReference type="Gene3D" id="1.10.287.230">
    <property type="match status" value="1"/>
</dbReference>
<dbReference type="Gene3D" id="1.10.287.10">
    <property type="entry name" value="S15/NS1, RNA-binding"/>
    <property type="match status" value="1"/>
</dbReference>
<dbReference type="HAMAP" id="MF_04067">
    <property type="entry name" value="INFV_NEP"/>
    <property type="match status" value="1"/>
</dbReference>
<dbReference type="InterPro" id="IPR000968">
    <property type="entry name" value="Flu_NS2"/>
</dbReference>
<dbReference type="Pfam" id="PF00601">
    <property type="entry name" value="Flu_NS2"/>
    <property type="match status" value="1"/>
</dbReference>
<dbReference type="SUPFAM" id="SSF101156">
    <property type="entry name" value="Nonstructural protein ns2, Nep, M1-binding domain"/>
    <property type="match status" value="1"/>
</dbReference>
<name>NEP_I78A3</name>